<name>VQ18_ARATH</name>
<evidence type="ECO:0000250" key="1">
    <source>
        <dbReference type="UniProtKB" id="Q9M9F0"/>
    </source>
</evidence>
<evidence type="ECO:0000256" key="2">
    <source>
        <dbReference type="SAM" id="MobiDB-lite"/>
    </source>
</evidence>
<evidence type="ECO:0000269" key="3">
    <source>
    </source>
</evidence>
<evidence type="ECO:0000303" key="4">
    <source>
    </source>
</evidence>
<evidence type="ECO:0000305" key="5"/>
<evidence type="ECO:0000305" key="6">
    <source>
    </source>
</evidence>
<evidence type="ECO:0000312" key="7">
    <source>
        <dbReference type="Araport" id="AT2G44340"/>
    </source>
</evidence>
<protein>
    <recommendedName>
        <fullName evidence="4">VQ motif-containing protein 18</fullName>
        <shortName evidence="4">AtVQ18</shortName>
    </recommendedName>
</protein>
<comment type="function">
    <text evidence="6">May function as positive regulator of plant growth.</text>
</comment>
<comment type="subcellular location">
    <subcellularLocation>
        <location evidence="1">Nucleus</location>
    </subcellularLocation>
</comment>
<comment type="miscellaneous">
    <text evidence="3">Plants over-expressing VQ18 show stunted growth phenotype.</text>
</comment>
<dbReference type="EMBL" id="AC004521">
    <property type="protein sequence ID" value="AAC16083.1"/>
    <property type="molecule type" value="Genomic_DNA"/>
</dbReference>
<dbReference type="EMBL" id="CP002685">
    <property type="protein sequence ID" value="AEC10409.1"/>
    <property type="molecule type" value="Genomic_DNA"/>
</dbReference>
<dbReference type="PIR" id="T02389">
    <property type="entry name" value="T02389"/>
</dbReference>
<dbReference type="RefSeq" id="NP_181962.1">
    <property type="nucleotide sequence ID" value="NM_129997.2"/>
</dbReference>
<dbReference type="STRING" id="3702.O64868"/>
<dbReference type="PaxDb" id="3702-AT2G44340.1"/>
<dbReference type="ProteomicsDB" id="242629"/>
<dbReference type="EnsemblPlants" id="AT2G44340.1">
    <property type="protein sequence ID" value="AT2G44340.1"/>
    <property type="gene ID" value="AT2G44340"/>
</dbReference>
<dbReference type="GeneID" id="819041"/>
<dbReference type="Gramene" id="AT2G44340.1">
    <property type="protein sequence ID" value="AT2G44340.1"/>
    <property type="gene ID" value="AT2G44340"/>
</dbReference>
<dbReference type="KEGG" id="ath:AT2G44340"/>
<dbReference type="Araport" id="AT2G44340"/>
<dbReference type="TAIR" id="AT2G44340">
    <property type="gene designation" value="VQ18"/>
</dbReference>
<dbReference type="eggNOG" id="ENOG502S3AS">
    <property type="taxonomic scope" value="Eukaryota"/>
</dbReference>
<dbReference type="HOGENOM" id="CLU_111794_0_0_1"/>
<dbReference type="InParanoid" id="O64868"/>
<dbReference type="OMA" id="KTIRCST"/>
<dbReference type="PhylomeDB" id="O64868"/>
<dbReference type="PRO" id="PR:O64868"/>
<dbReference type="Proteomes" id="UP000006548">
    <property type="component" value="Chromosome 2"/>
</dbReference>
<dbReference type="ExpressionAtlas" id="O64868">
    <property type="expression patterns" value="baseline and differential"/>
</dbReference>
<dbReference type="GO" id="GO:0005634">
    <property type="term" value="C:nucleus"/>
    <property type="evidence" value="ECO:0000314"/>
    <property type="project" value="TAIR"/>
</dbReference>
<dbReference type="GO" id="GO:0071215">
    <property type="term" value="P:cellular response to abscisic acid stimulus"/>
    <property type="evidence" value="ECO:0000316"/>
    <property type="project" value="TAIR"/>
</dbReference>
<dbReference type="GO" id="GO:0090351">
    <property type="term" value="P:seedling development"/>
    <property type="evidence" value="ECO:0000316"/>
    <property type="project" value="TAIR"/>
</dbReference>
<dbReference type="InterPro" id="IPR008889">
    <property type="entry name" value="VQ"/>
</dbReference>
<dbReference type="InterPro" id="IPR039607">
    <property type="entry name" value="VQ_8/17/18/20/21/25"/>
</dbReference>
<dbReference type="PANTHER" id="PTHR33143">
    <property type="entry name" value="F16F4.1 PROTEIN-RELATED"/>
    <property type="match status" value="1"/>
</dbReference>
<dbReference type="PANTHER" id="PTHR33143:SF74">
    <property type="entry name" value="VQ MOTIF-CONTAINING PROTEIN 18"/>
    <property type="match status" value="1"/>
</dbReference>
<dbReference type="Pfam" id="PF05678">
    <property type="entry name" value="VQ"/>
    <property type="match status" value="1"/>
</dbReference>
<gene>
    <name evidence="4" type="primary">VQ18</name>
    <name evidence="7" type="ordered locus">At2g44340</name>
</gene>
<sequence length="188" mass="20899">MEITQYQSFHEGSSSRVSMNRNSQVISKIKPKIRIIHIFAPEVIKTDVKNFRSLVQSLTGKPAPGEAKTGKKRAKSRITTPQEPVCDDHQPVNRLSGFTGLLANGGNHQVKEEWGSGDQSTSNTNTYFDLEGLIQDVGEDYFSSFPMRSSSSSQVEGFIFNNNNNNNNNNNNNNNNNTNFDTKAHNSS</sequence>
<reference key="1">
    <citation type="journal article" date="1999" name="Nature">
        <title>Sequence and analysis of chromosome 2 of the plant Arabidopsis thaliana.</title>
        <authorList>
            <person name="Lin X."/>
            <person name="Kaul S."/>
            <person name="Rounsley S.D."/>
            <person name="Shea T.P."/>
            <person name="Benito M.-I."/>
            <person name="Town C.D."/>
            <person name="Fujii C.Y."/>
            <person name="Mason T.M."/>
            <person name="Bowman C.L."/>
            <person name="Barnstead M.E."/>
            <person name="Feldblyum T.V."/>
            <person name="Buell C.R."/>
            <person name="Ketchum K.A."/>
            <person name="Lee J.J."/>
            <person name="Ronning C.M."/>
            <person name="Koo H.L."/>
            <person name="Moffat K.S."/>
            <person name="Cronin L.A."/>
            <person name="Shen M."/>
            <person name="Pai G."/>
            <person name="Van Aken S."/>
            <person name="Umayam L."/>
            <person name="Tallon L.J."/>
            <person name="Gill J.E."/>
            <person name="Adams M.D."/>
            <person name="Carrera A.J."/>
            <person name="Creasy T.H."/>
            <person name="Goodman H.M."/>
            <person name="Somerville C.R."/>
            <person name="Copenhaver G.P."/>
            <person name="Preuss D."/>
            <person name="Nierman W.C."/>
            <person name="White O."/>
            <person name="Eisen J.A."/>
            <person name="Salzberg S.L."/>
            <person name="Fraser C.M."/>
            <person name="Venter J.C."/>
        </authorList>
    </citation>
    <scope>NUCLEOTIDE SEQUENCE [LARGE SCALE GENOMIC DNA]</scope>
    <source>
        <strain>cv. Columbia</strain>
    </source>
</reference>
<reference key="2">
    <citation type="journal article" date="2017" name="Plant J.">
        <title>Araport11: a complete reannotation of the Arabidopsis thaliana reference genome.</title>
        <authorList>
            <person name="Cheng C.Y."/>
            <person name="Krishnakumar V."/>
            <person name="Chan A.P."/>
            <person name="Thibaud-Nissen F."/>
            <person name="Schobel S."/>
            <person name="Town C.D."/>
        </authorList>
    </citation>
    <scope>GENOME REANNOTATION</scope>
    <source>
        <strain>cv. Columbia</strain>
    </source>
</reference>
<reference key="3">
    <citation type="journal article" date="2012" name="Plant Physiol.">
        <title>Structural and functional analysis of VQ motif-containing proteins in Arabidopsis as interacting proteins of WRKY transcription factors.</title>
        <authorList>
            <person name="Cheng Y."/>
            <person name="Zhou Y."/>
            <person name="Yang Y."/>
            <person name="Chi Y.J."/>
            <person name="Zhou J."/>
            <person name="Chen J.Y."/>
            <person name="Wang F."/>
            <person name="Fan B."/>
            <person name="Shi K."/>
            <person name="Zhou Y.H."/>
            <person name="Yu J.Q."/>
            <person name="Chen Z."/>
        </authorList>
    </citation>
    <scope>FUNCTION</scope>
    <scope>GENE FAMILY</scope>
    <scope>NOMENCLATURE</scope>
</reference>
<keyword id="KW-0539">Nucleus</keyword>
<keyword id="KW-1185">Reference proteome</keyword>
<organism>
    <name type="scientific">Arabidopsis thaliana</name>
    <name type="common">Mouse-ear cress</name>
    <dbReference type="NCBI Taxonomy" id="3702"/>
    <lineage>
        <taxon>Eukaryota</taxon>
        <taxon>Viridiplantae</taxon>
        <taxon>Streptophyta</taxon>
        <taxon>Embryophyta</taxon>
        <taxon>Tracheophyta</taxon>
        <taxon>Spermatophyta</taxon>
        <taxon>Magnoliopsida</taxon>
        <taxon>eudicotyledons</taxon>
        <taxon>Gunneridae</taxon>
        <taxon>Pentapetalae</taxon>
        <taxon>rosids</taxon>
        <taxon>malvids</taxon>
        <taxon>Brassicales</taxon>
        <taxon>Brassicaceae</taxon>
        <taxon>Camelineae</taxon>
        <taxon>Arabidopsis</taxon>
    </lineage>
</organism>
<accession>O64868</accession>
<proteinExistence type="inferred from homology"/>
<feature type="chain" id="PRO_0000432315" description="VQ motif-containing protein 18">
    <location>
        <begin position="1"/>
        <end position="188"/>
    </location>
</feature>
<feature type="region of interest" description="Disordered" evidence="2">
    <location>
        <begin position="1"/>
        <end position="20"/>
    </location>
</feature>
<feature type="region of interest" description="Disordered" evidence="2">
    <location>
        <begin position="58"/>
        <end position="92"/>
    </location>
</feature>
<feature type="region of interest" description="Disordered" evidence="2">
    <location>
        <begin position="157"/>
        <end position="188"/>
    </location>
</feature>
<feature type="short sequence motif" description="VQ" evidence="5">
    <location>
        <begin position="51"/>
        <end position="60"/>
    </location>
</feature>
<feature type="compositionally biased region" description="Low complexity" evidence="2">
    <location>
        <begin position="161"/>
        <end position="179"/>
    </location>
</feature>